<dbReference type="EMBL" id="CP000124">
    <property type="protein sequence ID" value="ABA50760.1"/>
    <property type="status" value="ALT_INIT"/>
    <property type="molecule type" value="Genomic_DNA"/>
</dbReference>
<dbReference type="RefSeq" id="WP_004533998.1">
    <property type="nucleotide sequence ID" value="NC_007434.1"/>
</dbReference>
<dbReference type="SMR" id="Q3JPJ4"/>
<dbReference type="EnsemblBacteria" id="ABA50760">
    <property type="protein sequence ID" value="ABA50760"/>
    <property type="gene ID" value="BURPS1710b_3137"/>
</dbReference>
<dbReference type="KEGG" id="bpm:BURPS1710b_3137"/>
<dbReference type="HOGENOM" id="CLU_049215_2_1_4"/>
<dbReference type="Proteomes" id="UP000002700">
    <property type="component" value="Chromosome I"/>
</dbReference>
<dbReference type="GO" id="GO:0005737">
    <property type="term" value="C:cytoplasm"/>
    <property type="evidence" value="ECO:0007669"/>
    <property type="project" value="UniProtKB-SubCell"/>
</dbReference>
<dbReference type="GO" id="GO:0016151">
    <property type="term" value="F:nickel cation binding"/>
    <property type="evidence" value="ECO:0007669"/>
    <property type="project" value="UniProtKB-UniRule"/>
</dbReference>
<dbReference type="Gene3D" id="1.10.4190.10">
    <property type="entry name" value="Urease accessory protein UreF"/>
    <property type="match status" value="1"/>
</dbReference>
<dbReference type="HAMAP" id="MF_01385">
    <property type="entry name" value="UreF"/>
    <property type="match status" value="1"/>
</dbReference>
<dbReference type="InterPro" id="IPR002639">
    <property type="entry name" value="UreF"/>
</dbReference>
<dbReference type="InterPro" id="IPR038277">
    <property type="entry name" value="UreF_sf"/>
</dbReference>
<dbReference type="PANTHER" id="PTHR33620">
    <property type="entry name" value="UREASE ACCESSORY PROTEIN F"/>
    <property type="match status" value="1"/>
</dbReference>
<dbReference type="PANTHER" id="PTHR33620:SF1">
    <property type="entry name" value="UREASE ACCESSORY PROTEIN F"/>
    <property type="match status" value="1"/>
</dbReference>
<dbReference type="Pfam" id="PF01730">
    <property type="entry name" value="UreF"/>
    <property type="match status" value="1"/>
</dbReference>
<dbReference type="PIRSF" id="PIRSF009467">
    <property type="entry name" value="Ureas_acces_UreF"/>
    <property type="match status" value="1"/>
</dbReference>
<keyword id="KW-0143">Chaperone</keyword>
<keyword id="KW-0963">Cytoplasm</keyword>
<keyword id="KW-0996">Nickel insertion</keyword>
<feature type="chain" id="PRO_0000344107" description="Urease accessory protein UreF">
    <location>
        <begin position="1"/>
        <end position="226"/>
    </location>
</feature>
<gene>
    <name evidence="1" type="primary">ureF</name>
    <name type="ordered locus">BURPS1710b_3137</name>
</gene>
<accession>Q3JPJ4</accession>
<protein>
    <recommendedName>
        <fullName evidence="1">Urease accessory protein UreF</fullName>
    </recommendedName>
</protein>
<organism>
    <name type="scientific">Burkholderia pseudomallei (strain 1710b)</name>
    <dbReference type="NCBI Taxonomy" id="320372"/>
    <lineage>
        <taxon>Bacteria</taxon>
        <taxon>Pseudomonadati</taxon>
        <taxon>Pseudomonadota</taxon>
        <taxon>Betaproteobacteria</taxon>
        <taxon>Burkholderiales</taxon>
        <taxon>Burkholderiaceae</taxon>
        <taxon>Burkholderia</taxon>
        <taxon>pseudomallei group</taxon>
    </lineage>
</organism>
<proteinExistence type="inferred from homology"/>
<reference key="1">
    <citation type="journal article" date="2010" name="Genome Biol. Evol.">
        <title>Continuing evolution of Burkholderia mallei through genome reduction and large-scale rearrangements.</title>
        <authorList>
            <person name="Losada L."/>
            <person name="Ronning C.M."/>
            <person name="DeShazer D."/>
            <person name="Woods D."/>
            <person name="Fedorova N."/>
            <person name="Kim H.S."/>
            <person name="Shabalina S.A."/>
            <person name="Pearson T.R."/>
            <person name="Brinkac L."/>
            <person name="Tan P."/>
            <person name="Nandi T."/>
            <person name="Crabtree J."/>
            <person name="Badger J."/>
            <person name="Beckstrom-Sternberg S."/>
            <person name="Saqib M."/>
            <person name="Schutzer S.E."/>
            <person name="Keim P."/>
            <person name="Nierman W.C."/>
        </authorList>
    </citation>
    <scope>NUCLEOTIDE SEQUENCE [LARGE SCALE GENOMIC DNA]</scope>
    <source>
        <strain>1710b</strain>
    </source>
</reference>
<name>UREF_BURP1</name>
<sequence>MDTAELVALLHLASPALPIGAFSYSQGLEAALDAPLIRDADGARDWIASGLADVLAQGELPFLAHQLARWHAHDAAALADANDEFVASRESFELRRETEQMGWSLAQLCASLEWGDAARRATLASIPSVALPSAFAFAAAAHGATPDAALAAYAFGWVENQTAAAIKAVPLGQLAGQKIIVALREPIRDAVRRALATPPEAINTFAPQLGILSARHESQYSRLFRS</sequence>
<comment type="function">
    <text evidence="1">Required for maturation of urease via the functional incorporation of the urease nickel metallocenter.</text>
</comment>
<comment type="subunit">
    <text evidence="1">UreD, UreF and UreG form a complex that acts as a GTP-hydrolysis-dependent molecular chaperone, activating the urease apoprotein by helping to assemble the nickel containing metallocenter of UreC. The UreE protein probably delivers the nickel.</text>
</comment>
<comment type="subcellular location">
    <subcellularLocation>
        <location evidence="1">Cytoplasm</location>
    </subcellularLocation>
</comment>
<comment type="similarity">
    <text evidence="1">Belongs to the UreF family.</text>
</comment>
<comment type="sequence caution" evidence="2">
    <conflict type="erroneous initiation">
        <sequence resource="EMBL-CDS" id="ABA50760"/>
    </conflict>
</comment>
<evidence type="ECO:0000255" key="1">
    <source>
        <dbReference type="HAMAP-Rule" id="MF_01385"/>
    </source>
</evidence>
<evidence type="ECO:0000305" key="2"/>